<sequence length="262" mass="29197">MKHILLTNDDGYDSVGLKALIDALSPIAKITVVAPANNKSACGHSLTLDKPLRLISIKDDFYKIDDGSPTDCIFLSLGNLFKEGFKPDLVISGINIGANMGEDITYSGTASAAMEAVIHKIPAIAISQVCQNRCQDIQNGWEFELAKDTIVKLATRILNNSFPLDERKFLNVNIPPIKPNECKGMKITKAGFREYGTDSDRHINPRGEEYYWIGLHPLIWKASEDQSCDFEAIKENYVSISPIKLDMTSYDDLKNLENWLNN</sequence>
<gene>
    <name evidence="1" type="primary">surE</name>
    <name type="ordered locus">Abu_2263</name>
</gene>
<dbReference type="EC" id="3.1.3.5" evidence="1"/>
<dbReference type="EMBL" id="CP000361">
    <property type="protein sequence ID" value="ABV68476.1"/>
    <property type="molecule type" value="Genomic_DNA"/>
</dbReference>
<dbReference type="RefSeq" id="WP_012148101.1">
    <property type="nucleotide sequence ID" value="NC_009850.1"/>
</dbReference>
<dbReference type="SMR" id="A8EX03"/>
<dbReference type="STRING" id="367737.Abu_2263"/>
<dbReference type="GeneID" id="24305264"/>
<dbReference type="KEGG" id="abu:Abu_2263"/>
<dbReference type="eggNOG" id="COG0496">
    <property type="taxonomic scope" value="Bacteria"/>
</dbReference>
<dbReference type="HOGENOM" id="CLU_045192_1_2_7"/>
<dbReference type="Proteomes" id="UP000001136">
    <property type="component" value="Chromosome"/>
</dbReference>
<dbReference type="GO" id="GO:0005737">
    <property type="term" value="C:cytoplasm"/>
    <property type="evidence" value="ECO:0007669"/>
    <property type="project" value="UniProtKB-SubCell"/>
</dbReference>
<dbReference type="GO" id="GO:0008254">
    <property type="term" value="F:3'-nucleotidase activity"/>
    <property type="evidence" value="ECO:0007669"/>
    <property type="project" value="TreeGrafter"/>
</dbReference>
<dbReference type="GO" id="GO:0008253">
    <property type="term" value="F:5'-nucleotidase activity"/>
    <property type="evidence" value="ECO:0007669"/>
    <property type="project" value="UniProtKB-UniRule"/>
</dbReference>
<dbReference type="GO" id="GO:0004309">
    <property type="term" value="F:exopolyphosphatase activity"/>
    <property type="evidence" value="ECO:0007669"/>
    <property type="project" value="TreeGrafter"/>
</dbReference>
<dbReference type="GO" id="GO:0046872">
    <property type="term" value="F:metal ion binding"/>
    <property type="evidence" value="ECO:0007669"/>
    <property type="project" value="UniProtKB-UniRule"/>
</dbReference>
<dbReference type="GO" id="GO:0000166">
    <property type="term" value="F:nucleotide binding"/>
    <property type="evidence" value="ECO:0007669"/>
    <property type="project" value="UniProtKB-KW"/>
</dbReference>
<dbReference type="FunFam" id="3.40.1210.10:FF:000001">
    <property type="entry name" value="5'/3'-nucleotidase SurE"/>
    <property type="match status" value="1"/>
</dbReference>
<dbReference type="Gene3D" id="3.40.1210.10">
    <property type="entry name" value="Survival protein SurE-like phosphatase/nucleotidase"/>
    <property type="match status" value="1"/>
</dbReference>
<dbReference type="HAMAP" id="MF_00060">
    <property type="entry name" value="SurE"/>
    <property type="match status" value="1"/>
</dbReference>
<dbReference type="InterPro" id="IPR030048">
    <property type="entry name" value="SurE"/>
</dbReference>
<dbReference type="InterPro" id="IPR002828">
    <property type="entry name" value="SurE-like_Pase/nucleotidase"/>
</dbReference>
<dbReference type="InterPro" id="IPR036523">
    <property type="entry name" value="SurE-like_sf"/>
</dbReference>
<dbReference type="NCBIfam" id="NF001490">
    <property type="entry name" value="PRK00346.1-4"/>
    <property type="match status" value="1"/>
</dbReference>
<dbReference type="NCBIfam" id="NF001494">
    <property type="entry name" value="PRK00346.2-4"/>
    <property type="match status" value="1"/>
</dbReference>
<dbReference type="NCBIfam" id="TIGR00087">
    <property type="entry name" value="surE"/>
    <property type="match status" value="1"/>
</dbReference>
<dbReference type="PANTHER" id="PTHR30457">
    <property type="entry name" value="5'-NUCLEOTIDASE SURE"/>
    <property type="match status" value="1"/>
</dbReference>
<dbReference type="PANTHER" id="PTHR30457:SF12">
    <property type="entry name" value="5'_3'-NUCLEOTIDASE SURE"/>
    <property type="match status" value="1"/>
</dbReference>
<dbReference type="Pfam" id="PF01975">
    <property type="entry name" value="SurE"/>
    <property type="match status" value="1"/>
</dbReference>
<dbReference type="SUPFAM" id="SSF64167">
    <property type="entry name" value="SurE-like"/>
    <property type="match status" value="1"/>
</dbReference>
<comment type="function">
    <text evidence="1">Nucleotidase that shows phosphatase activity on nucleoside 5'-monophosphates.</text>
</comment>
<comment type="catalytic activity">
    <reaction evidence="1">
        <text>a ribonucleoside 5'-phosphate + H2O = a ribonucleoside + phosphate</text>
        <dbReference type="Rhea" id="RHEA:12484"/>
        <dbReference type="ChEBI" id="CHEBI:15377"/>
        <dbReference type="ChEBI" id="CHEBI:18254"/>
        <dbReference type="ChEBI" id="CHEBI:43474"/>
        <dbReference type="ChEBI" id="CHEBI:58043"/>
        <dbReference type="EC" id="3.1.3.5"/>
    </reaction>
</comment>
<comment type="cofactor">
    <cofactor evidence="1">
        <name>a divalent metal cation</name>
        <dbReference type="ChEBI" id="CHEBI:60240"/>
    </cofactor>
    <text evidence="1">Binds 1 divalent metal cation per subunit.</text>
</comment>
<comment type="subcellular location">
    <subcellularLocation>
        <location evidence="1">Cytoplasm</location>
    </subcellularLocation>
</comment>
<comment type="similarity">
    <text evidence="1">Belongs to the SurE nucleotidase family.</text>
</comment>
<protein>
    <recommendedName>
        <fullName evidence="1">5'-nucleotidase SurE</fullName>
        <ecNumber evidence="1">3.1.3.5</ecNumber>
    </recommendedName>
    <alternativeName>
        <fullName evidence="1">Nucleoside 5'-monophosphate phosphohydrolase</fullName>
    </alternativeName>
</protein>
<evidence type="ECO:0000255" key="1">
    <source>
        <dbReference type="HAMAP-Rule" id="MF_00060"/>
    </source>
</evidence>
<accession>A8EX03</accession>
<reference key="1">
    <citation type="journal article" date="2007" name="PLoS ONE">
        <title>The complete genome sequence and analysis of the Epsilonproteobacterium Arcobacter butzleri.</title>
        <authorList>
            <person name="Miller W.G."/>
            <person name="Parker C.T."/>
            <person name="Rubenfield M."/>
            <person name="Mendz G.L."/>
            <person name="Woesten M.M.S.M."/>
            <person name="Ussery D.W."/>
            <person name="Stolz J.F."/>
            <person name="Binnewies T.T."/>
            <person name="Hallin P.F."/>
            <person name="Wang G."/>
            <person name="Malek J.A."/>
            <person name="Rogosin A."/>
            <person name="Stanker L.H."/>
            <person name="Mandrell R.E."/>
        </authorList>
    </citation>
    <scope>NUCLEOTIDE SEQUENCE [LARGE SCALE GENOMIC DNA]</scope>
    <source>
        <strain>RM4018</strain>
    </source>
</reference>
<name>SURE_ALIB4</name>
<organism>
    <name type="scientific">Aliarcobacter butzleri (strain RM4018)</name>
    <name type="common">Arcobacter butzleri</name>
    <dbReference type="NCBI Taxonomy" id="367737"/>
    <lineage>
        <taxon>Bacteria</taxon>
        <taxon>Pseudomonadati</taxon>
        <taxon>Campylobacterota</taxon>
        <taxon>Epsilonproteobacteria</taxon>
        <taxon>Campylobacterales</taxon>
        <taxon>Arcobacteraceae</taxon>
        <taxon>Aliarcobacter</taxon>
    </lineage>
</organism>
<proteinExistence type="inferred from homology"/>
<feature type="chain" id="PRO_0000335254" description="5'-nucleotidase SurE">
    <location>
        <begin position="1"/>
        <end position="262"/>
    </location>
</feature>
<feature type="binding site" evidence="1">
    <location>
        <position position="9"/>
    </location>
    <ligand>
        <name>a divalent metal cation</name>
        <dbReference type="ChEBI" id="CHEBI:60240"/>
    </ligand>
</feature>
<feature type="binding site" evidence="1">
    <location>
        <position position="10"/>
    </location>
    <ligand>
        <name>a divalent metal cation</name>
        <dbReference type="ChEBI" id="CHEBI:60240"/>
    </ligand>
</feature>
<feature type="binding site" evidence="1">
    <location>
        <position position="40"/>
    </location>
    <ligand>
        <name>a divalent metal cation</name>
        <dbReference type="ChEBI" id="CHEBI:60240"/>
    </ligand>
</feature>
<feature type="binding site" evidence="1">
    <location>
        <position position="95"/>
    </location>
    <ligand>
        <name>a divalent metal cation</name>
        <dbReference type="ChEBI" id="CHEBI:60240"/>
    </ligand>
</feature>
<keyword id="KW-0963">Cytoplasm</keyword>
<keyword id="KW-0378">Hydrolase</keyword>
<keyword id="KW-0479">Metal-binding</keyword>
<keyword id="KW-0547">Nucleotide-binding</keyword>
<keyword id="KW-1185">Reference proteome</keyword>